<sequence length="255" mass="26972">MRHPLVMGNWKLNGSRHMVHELVSNLRKELAGVAGCAVAIAPPEMYIDMAKREAEGSHIMLGAQNVDLNLSGAFTGETSAAMLKDIGAQYIIIGHSERRTYHKESDELIAKKFAVLKEQGLTPVLCIGETEAENEAGKTEEVCARQIDAVLKTQGAAAFEGAVIAYEPVWAIGTGKSATPAQAQAVHKFIRDHIAKVDANIAEQVIIQYGGSVNASNAAELFAQPDIDGALVGGASLKADAFAVIVKAAEAAKQA</sequence>
<gene>
    <name evidence="1" type="primary">tpiA</name>
    <name type="ordered locus">SbBS512_E4399</name>
</gene>
<feature type="chain" id="PRO_1000096534" description="Triosephosphate isomerase">
    <location>
        <begin position="1"/>
        <end position="255"/>
    </location>
</feature>
<feature type="active site" description="Electrophile" evidence="1">
    <location>
        <position position="95"/>
    </location>
</feature>
<feature type="active site" description="Proton acceptor" evidence="1">
    <location>
        <position position="167"/>
    </location>
</feature>
<feature type="binding site" evidence="1">
    <location>
        <begin position="9"/>
        <end position="11"/>
    </location>
    <ligand>
        <name>substrate</name>
    </ligand>
</feature>
<feature type="binding site" evidence="1">
    <location>
        <position position="173"/>
    </location>
    <ligand>
        <name>substrate</name>
    </ligand>
</feature>
<feature type="binding site" evidence="1">
    <location>
        <position position="212"/>
    </location>
    <ligand>
        <name>substrate</name>
    </ligand>
</feature>
<feature type="binding site" evidence="1">
    <location>
        <begin position="233"/>
        <end position="234"/>
    </location>
    <ligand>
        <name>substrate</name>
    </ligand>
</feature>
<protein>
    <recommendedName>
        <fullName evidence="1">Triosephosphate isomerase</fullName>
        <shortName evidence="1">TIM</shortName>
        <shortName evidence="1">TPI</shortName>
        <ecNumber evidence="1">5.3.1.1</ecNumber>
    </recommendedName>
    <alternativeName>
        <fullName evidence="1">Triose-phosphate isomerase</fullName>
    </alternativeName>
</protein>
<comment type="function">
    <text evidence="1">Involved in the gluconeogenesis. Catalyzes stereospecifically the conversion of dihydroxyacetone phosphate (DHAP) to D-glyceraldehyde-3-phosphate (G3P).</text>
</comment>
<comment type="catalytic activity">
    <reaction evidence="1">
        <text>D-glyceraldehyde 3-phosphate = dihydroxyacetone phosphate</text>
        <dbReference type="Rhea" id="RHEA:18585"/>
        <dbReference type="ChEBI" id="CHEBI:57642"/>
        <dbReference type="ChEBI" id="CHEBI:59776"/>
        <dbReference type="EC" id="5.3.1.1"/>
    </reaction>
</comment>
<comment type="pathway">
    <text evidence="1">Carbohydrate biosynthesis; gluconeogenesis.</text>
</comment>
<comment type="pathway">
    <text evidence="1">Carbohydrate degradation; glycolysis; D-glyceraldehyde 3-phosphate from glycerone phosphate: step 1/1.</text>
</comment>
<comment type="subunit">
    <text evidence="1">Homodimer.</text>
</comment>
<comment type="subcellular location">
    <subcellularLocation>
        <location evidence="1">Cytoplasm</location>
    </subcellularLocation>
</comment>
<comment type="similarity">
    <text evidence="1">Belongs to the triosephosphate isomerase family.</text>
</comment>
<evidence type="ECO:0000255" key="1">
    <source>
        <dbReference type="HAMAP-Rule" id="MF_00147"/>
    </source>
</evidence>
<name>TPIS_SHIB3</name>
<organism>
    <name type="scientific">Shigella boydii serotype 18 (strain CDC 3083-94 / BS512)</name>
    <dbReference type="NCBI Taxonomy" id="344609"/>
    <lineage>
        <taxon>Bacteria</taxon>
        <taxon>Pseudomonadati</taxon>
        <taxon>Pseudomonadota</taxon>
        <taxon>Gammaproteobacteria</taxon>
        <taxon>Enterobacterales</taxon>
        <taxon>Enterobacteriaceae</taxon>
        <taxon>Shigella</taxon>
    </lineage>
</organism>
<reference key="1">
    <citation type="submission" date="2008-05" db="EMBL/GenBank/DDBJ databases">
        <title>Complete sequence of Shigella boydii serotype 18 strain BS512.</title>
        <authorList>
            <person name="Rasko D.A."/>
            <person name="Rosovitz M."/>
            <person name="Maurelli A.T."/>
            <person name="Myers G."/>
            <person name="Seshadri R."/>
            <person name="Cer R."/>
            <person name="Jiang L."/>
            <person name="Ravel J."/>
            <person name="Sebastian Y."/>
        </authorList>
    </citation>
    <scope>NUCLEOTIDE SEQUENCE [LARGE SCALE GENOMIC DNA]</scope>
    <source>
        <strain>CDC 3083-94 / BS512</strain>
    </source>
</reference>
<proteinExistence type="inferred from homology"/>
<dbReference type="EC" id="5.3.1.1" evidence="1"/>
<dbReference type="EMBL" id="CP001063">
    <property type="protein sequence ID" value="ACD10226.1"/>
    <property type="molecule type" value="Genomic_DNA"/>
</dbReference>
<dbReference type="RefSeq" id="WP_001216325.1">
    <property type="nucleotide sequence ID" value="NC_010658.1"/>
</dbReference>
<dbReference type="SMR" id="B2TVR1"/>
<dbReference type="STRING" id="344609.SbBS512_E4399"/>
<dbReference type="GeneID" id="93777979"/>
<dbReference type="KEGG" id="sbc:SbBS512_E4399"/>
<dbReference type="HOGENOM" id="CLU_024251_2_1_6"/>
<dbReference type="UniPathway" id="UPA00109">
    <property type="reaction ID" value="UER00189"/>
</dbReference>
<dbReference type="UniPathway" id="UPA00138"/>
<dbReference type="Proteomes" id="UP000001030">
    <property type="component" value="Chromosome"/>
</dbReference>
<dbReference type="GO" id="GO:0005829">
    <property type="term" value="C:cytosol"/>
    <property type="evidence" value="ECO:0007669"/>
    <property type="project" value="TreeGrafter"/>
</dbReference>
<dbReference type="GO" id="GO:0004807">
    <property type="term" value="F:triose-phosphate isomerase activity"/>
    <property type="evidence" value="ECO:0007669"/>
    <property type="project" value="UniProtKB-UniRule"/>
</dbReference>
<dbReference type="GO" id="GO:0006094">
    <property type="term" value="P:gluconeogenesis"/>
    <property type="evidence" value="ECO:0007669"/>
    <property type="project" value="UniProtKB-UniRule"/>
</dbReference>
<dbReference type="GO" id="GO:0046166">
    <property type="term" value="P:glyceraldehyde-3-phosphate biosynthetic process"/>
    <property type="evidence" value="ECO:0007669"/>
    <property type="project" value="TreeGrafter"/>
</dbReference>
<dbReference type="GO" id="GO:0019563">
    <property type="term" value="P:glycerol catabolic process"/>
    <property type="evidence" value="ECO:0007669"/>
    <property type="project" value="TreeGrafter"/>
</dbReference>
<dbReference type="GO" id="GO:0006096">
    <property type="term" value="P:glycolytic process"/>
    <property type="evidence" value="ECO:0007669"/>
    <property type="project" value="UniProtKB-UniRule"/>
</dbReference>
<dbReference type="CDD" id="cd00311">
    <property type="entry name" value="TIM"/>
    <property type="match status" value="1"/>
</dbReference>
<dbReference type="FunFam" id="3.20.20.70:FF:000020">
    <property type="entry name" value="Triosephosphate isomerase"/>
    <property type="match status" value="1"/>
</dbReference>
<dbReference type="Gene3D" id="3.20.20.70">
    <property type="entry name" value="Aldolase class I"/>
    <property type="match status" value="1"/>
</dbReference>
<dbReference type="HAMAP" id="MF_00147_B">
    <property type="entry name" value="TIM_B"/>
    <property type="match status" value="1"/>
</dbReference>
<dbReference type="InterPro" id="IPR013785">
    <property type="entry name" value="Aldolase_TIM"/>
</dbReference>
<dbReference type="InterPro" id="IPR035990">
    <property type="entry name" value="TIM_sf"/>
</dbReference>
<dbReference type="InterPro" id="IPR022896">
    <property type="entry name" value="TrioseP_Isoase_bac/euk"/>
</dbReference>
<dbReference type="InterPro" id="IPR000652">
    <property type="entry name" value="Triosephosphate_isomerase"/>
</dbReference>
<dbReference type="InterPro" id="IPR020861">
    <property type="entry name" value="Triosephosphate_isomerase_AS"/>
</dbReference>
<dbReference type="NCBIfam" id="TIGR00419">
    <property type="entry name" value="tim"/>
    <property type="match status" value="1"/>
</dbReference>
<dbReference type="PANTHER" id="PTHR21139">
    <property type="entry name" value="TRIOSEPHOSPHATE ISOMERASE"/>
    <property type="match status" value="1"/>
</dbReference>
<dbReference type="PANTHER" id="PTHR21139:SF42">
    <property type="entry name" value="TRIOSEPHOSPHATE ISOMERASE"/>
    <property type="match status" value="1"/>
</dbReference>
<dbReference type="Pfam" id="PF00121">
    <property type="entry name" value="TIM"/>
    <property type="match status" value="1"/>
</dbReference>
<dbReference type="SUPFAM" id="SSF51351">
    <property type="entry name" value="Triosephosphate isomerase (TIM)"/>
    <property type="match status" value="1"/>
</dbReference>
<dbReference type="PROSITE" id="PS00171">
    <property type="entry name" value="TIM_1"/>
    <property type="match status" value="1"/>
</dbReference>
<dbReference type="PROSITE" id="PS51440">
    <property type="entry name" value="TIM_2"/>
    <property type="match status" value="1"/>
</dbReference>
<accession>B2TVR1</accession>
<keyword id="KW-0963">Cytoplasm</keyword>
<keyword id="KW-0312">Gluconeogenesis</keyword>
<keyword id="KW-0324">Glycolysis</keyword>
<keyword id="KW-0413">Isomerase</keyword>
<keyword id="KW-1185">Reference proteome</keyword>